<evidence type="ECO:0000255" key="1"/>
<evidence type="ECO:0000269" key="2">
    <source>
    </source>
</evidence>
<evidence type="ECO:0000305" key="3"/>
<comment type="subcellular location">
    <subcellularLocation>
        <location evidence="2">Secreted</location>
    </subcellularLocation>
</comment>
<comment type="tissue specificity">
    <text evidence="2">Nacreous layer of shell (at protein level). Expressed primarily in the mantle with highest level in the mantle pallium and lower level in the mantle edge.</text>
</comment>
<dbReference type="EMBL" id="HE610403">
    <property type="protein sequence ID" value="CCE46177.1"/>
    <property type="molecule type" value="mRNA"/>
</dbReference>
<dbReference type="SMR" id="H2A0N6"/>
<dbReference type="GO" id="GO:0005576">
    <property type="term" value="C:extracellular region"/>
    <property type="evidence" value="ECO:0007669"/>
    <property type="project" value="UniProtKB-SubCell"/>
</dbReference>
<proteinExistence type="evidence at protein level"/>
<organism>
    <name type="scientific">Margaritifera margaritifera</name>
    <name type="common">Freshwater pearl mussel</name>
    <dbReference type="NCBI Taxonomy" id="102329"/>
    <lineage>
        <taxon>Eukaryota</taxon>
        <taxon>Metazoa</taxon>
        <taxon>Spiralia</taxon>
        <taxon>Lophotrochozoa</taxon>
        <taxon>Mollusca</taxon>
        <taxon>Bivalvia</taxon>
        <taxon>Autobranchia</taxon>
        <taxon>Pteriomorphia</taxon>
        <taxon>Pterioida</taxon>
        <taxon>Pterioidea</taxon>
        <taxon>Pteriidae</taxon>
        <taxon>Pinctada</taxon>
    </lineage>
</organism>
<protein>
    <recommendedName>
        <fullName>Uncharacterized shell protein 7</fullName>
    </recommendedName>
    <alternativeName>
        <fullName>Nacre uncharacterized shell protein 3</fullName>
        <shortName>NUSP3</shortName>
    </alternativeName>
</protein>
<feature type="signal peptide" evidence="1">
    <location>
        <begin position="1"/>
        <end position="23"/>
    </location>
</feature>
<feature type="chain" id="PRO_0000417927" description="Uncharacterized shell protein 7" evidence="1">
    <location>
        <begin position="24"/>
        <end position="100"/>
    </location>
</feature>
<reference evidence="3" key="1">
    <citation type="journal article" date="2010" name="BMC Genomics">
        <title>Transcriptome and proteome analysis of Pinctada margaritifera calcifying mantle and shell: focus on biomineralization.</title>
        <authorList>
            <person name="Joubert C."/>
            <person name="Piquemal D."/>
            <person name="Marie B."/>
            <person name="Manchon L."/>
            <person name="Pierrat F."/>
            <person name="Zanella-Cleon I."/>
            <person name="Cochennec-Laureau N."/>
            <person name="Gueguen Y."/>
            <person name="Montagnani C."/>
        </authorList>
    </citation>
    <scope>NUCLEOTIDE SEQUENCE [MRNA]</scope>
    <scope>IDENTIFICATION</scope>
    <source>
        <tissue>Mantle</tissue>
    </source>
</reference>
<reference key="2">
    <citation type="journal article" date="2012" name="Proc. Natl. Acad. Sci. U.S.A.">
        <title>Different secretory repertoires control the biomineralization processes of prism and nacre deposition of the pearl oyster shell.</title>
        <authorList>
            <person name="Marie B."/>
            <person name="Joubert C."/>
            <person name="Tayale A."/>
            <person name="Zanella-Cleon I."/>
            <person name="Belliard C."/>
            <person name="Piquemal D."/>
            <person name="Cochennec-Laureau N."/>
            <person name="Marin F."/>
            <person name="Gueguen Y."/>
            <person name="Montagnani C."/>
        </authorList>
    </citation>
    <scope>PROTEIN SEQUENCE OF 60-70 AND 79-91</scope>
    <scope>SUBCELLULAR LOCATION</scope>
    <scope>TISSUE SPECIFICITY</scope>
    <source>
        <tissue>Shell</tissue>
    </source>
</reference>
<keyword id="KW-0903">Direct protein sequencing</keyword>
<keyword id="KW-0964">Secreted</keyword>
<keyword id="KW-0732">Signal</keyword>
<accession>H2A0N6</accession>
<sequence>MKYVALAFVLSLVILQISAQVGAAYIPGMGSIGSVGRAGAAAGASAGIGNQGRGAGLLRFFTLILENLMKNNQQAQPKQDNFGAQLQNLLKKKMILEMIN</sequence>
<name>USP7_PINMG</name>